<protein>
    <recommendedName>
        <fullName evidence="6">Beta-galactosidase large subunit</fullName>
        <shortName evidence="6">Beta-gal large subunit</shortName>
        <ecNumber evidence="2">3.2.1.23</ecNumber>
    </recommendedName>
</protein>
<accession>Q48846</accession>
<keyword id="KW-0326">Glycosidase</keyword>
<keyword id="KW-0378">Hydrolase</keyword>
<organism>
    <name type="scientific">Latilactobacillus sakei</name>
    <name type="common">Lactobacillus sakei</name>
    <dbReference type="NCBI Taxonomy" id="1599"/>
    <lineage>
        <taxon>Bacteria</taxon>
        <taxon>Bacillati</taxon>
        <taxon>Bacillota</taxon>
        <taxon>Bacilli</taxon>
        <taxon>Lactobacillales</taxon>
        <taxon>Lactobacillaceae</taxon>
        <taxon>Latilactobacillus</taxon>
    </lineage>
</organism>
<dbReference type="EC" id="3.2.1.23" evidence="2"/>
<dbReference type="EMBL" id="X82287">
    <property type="protein sequence ID" value="CAA57730.1"/>
    <property type="molecule type" value="Genomic_DNA"/>
</dbReference>
<dbReference type="RefSeq" id="WP_025015980.1">
    <property type="nucleotide sequence ID" value="NZ_JARACF010000002.1"/>
</dbReference>
<dbReference type="SMR" id="Q48846"/>
<dbReference type="CAZy" id="GH2">
    <property type="family name" value="Glycoside Hydrolase Family 2"/>
</dbReference>
<dbReference type="GO" id="GO:0009341">
    <property type="term" value="C:beta-galactosidase complex"/>
    <property type="evidence" value="ECO:0007669"/>
    <property type="project" value="TreeGrafter"/>
</dbReference>
<dbReference type="GO" id="GO:0004565">
    <property type="term" value="F:beta-galactosidase activity"/>
    <property type="evidence" value="ECO:0007669"/>
    <property type="project" value="UniProtKB-EC"/>
</dbReference>
<dbReference type="GO" id="GO:0005990">
    <property type="term" value="P:lactose catabolic process"/>
    <property type="evidence" value="ECO:0007669"/>
    <property type="project" value="TreeGrafter"/>
</dbReference>
<dbReference type="Gene3D" id="2.60.120.260">
    <property type="entry name" value="Galactose-binding domain-like"/>
    <property type="match status" value="1"/>
</dbReference>
<dbReference type="Gene3D" id="3.20.20.80">
    <property type="entry name" value="Glycosidases"/>
    <property type="match status" value="1"/>
</dbReference>
<dbReference type="Gene3D" id="2.60.40.10">
    <property type="entry name" value="Immunoglobulins"/>
    <property type="match status" value="1"/>
</dbReference>
<dbReference type="InterPro" id="IPR050347">
    <property type="entry name" value="Bact_Beta-galactosidase"/>
</dbReference>
<dbReference type="InterPro" id="IPR036156">
    <property type="entry name" value="Beta-gal/glucu_dom_sf"/>
</dbReference>
<dbReference type="InterPro" id="IPR008979">
    <property type="entry name" value="Galactose-bd-like_sf"/>
</dbReference>
<dbReference type="InterPro" id="IPR006101">
    <property type="entry name" value="Glyco_hydro_2"/>
</dbReference>
<dbReference type="InterPro" id="IPR023232">
    <property type="entry name" value="Glyco_hydro_2_AS"/>
</dbReference>
<dbReference type="InterPro" id="IPR006103">
    <property type="entry name" value="Glyco_hydro_2_cat"/>
</dbReference>
<dbReference type="InterPro" id="IPR023230">
    <property type="entry name" value="Glyco_hydro_2_CS"/>
</dbReference>
<dbReference type="InterPro" id="IPR006102">
    <property type="entry name" value="Glyco_hydro_2_Ig-like"/>
</dbReference>
<dbReference type="InterPro" id="IPR006104">
    <property type="entry name" value="Glyco_hydro_2_N"/>
</dbReference>
<dbReference type="InterPro" id="IPR017853">
    <property type="entry name" value="Glycoside_hydrolase_SF"/>
</dbReference>
<dbReference type="InterPro" id="IPR013783">
    <property type="entry name" value="Ig-like_fold"/>
</dbReference>
<dbReference type="PANTHER" id="PTHR46323">
    <property type="entry name" value="BETA-GALACTOSIDASE"/>
    <property type="match status" value="1"/>
</dbReference>
<dbReference type="PANTHER" id="PTHR46323:SF2">
    <property type="entry name" value="BETA-GALACTOSIDASE"/>
    <property type="match status" value="1"/>
</dbReference>
<dbReference type="Pfam" id="PF00703">
    <property type="entry name" value="Glyco_hydro_2"/>
    <property type="match status" value="1"/>
</dbReference>
<dbReference type="Pfam" id="PF02836">
    <property type="entry name" value="Glyco_hydro_2_C"/>
    <property type="match status" value="1"/>
</dbReference>
<dbReference type="Pfam" id="PF02837">
    <property type="entry name" value="Glyco_hydro_2_N"/>
    <property type="match status" value="1"/>
</dbReference>
<dbReference type="PRINTS" id="PR00132">
    <property type="entry name" value="GLHYDRLASE2"/>
</dbReference>
<dbReference type="SUPFAM" id="SSF51445">
    <property type="entry name" value="(Trans)glycosidases"/>
    <property type="match status" value="1"/>
</dbReference>
<dbReference type="SUPFAM" id="SSF49303">
    <property type="entry name" value="beta-Galactosidase/glucuronidase domain"/>
    <property type="match status" value="1"/>
</dbReference>
<dbReference type="SUPFAM" id="SSF49785">
    <property type="entry name" value="Galactose-binding domain-like"/>
    <property type="match status" value="1"/>
</dbReference>
<dbReference type="PROSITE" id="PS00719">
    <property type="entry name" value="GLYCOSYL_HYDROL_F2_1"/>
    <property type="match status" value="1"/>
</dbReference>
<dbReference type="PROSITE" id="PS00608">
    <property type="entry name" value="GLYCOSYL_HYDROL_F2_2"/>
    <property type="match status" value="1"/>
</dbReference>
<gene>
    <name evidence="4" type="primary">lacL</name>
</gene>
<sequence length="625" mass="72457">MQPNIQWLDTPAVFRVGQLPAHSDHRYYATLAEMAQQQSSFEQSLNGTWQFHYSVNAASRPKSFYELAFDAQDFEPITVPQHIELAGYEQLHYINTMYPWEGHYYRRPAFSTSDDKQHLGMFSEADYNPVGSYLHHFDLTPALRNQRVIIRFEGVEQAMYVWLNGQFIGYAEDSFTPSEFDLTPYLKETDNCLAVEVHKRSSAAFIEDQDFFRFFGIFRDVKLLAKPRTHLEDLWVIPEYDVVQQTGQVKLRLQFSGDENRVHLRIRDQHQIILTADLTSGAQVNDLYKMPELVQAWSNQTPNLYTLELEVVDQAGETIEISQQPFGFRKIEIKDKVMLLNGKRLVINGVNRHEWHPETGRTITAEDEAWDIACMQRNHINAVRTSHYPDRLSFYNGCDQAGIYMMAETNLESHGSWQKMGAVEPSWNVPGSYDEWEAATLDRARTNFETFKNHVSILFWSLGNESYAGSVLEKMNAYYKQQDPTRLVHYEGVFRAPEYKATISDVESRMYATPAEIKAYLDNAPQKPFILCEYMHDMGNSLGGMQSYIDLLSQYDMYQGGFIWDFIDQALLVTDPVTGQRELRYGGDFDDRPSDYEFSGDGLVFATRDEKPAMQEVRYYYGEHK</sequence>
<evidence type="ECO:0000250" key="1"/>
<evidence type="ECO:0000250" key="2">
    <source>
        <dbReference type="UniProtKB" id="Q02603"/>
    </source>
</evidence>
<evidence type="ECO:0000269" key="3">
    <source>
    </source>
</evidence>
<evidence type="ECO:0000303" key="4">
    <source>
    </source>
</evidence>
<evidence type="ECO:0000305" key="5"/>
<evidence type="ECO:0000305" key="6">
    <source>
    </source>
</evidence>
<proteinExistence type="evidence at protein level"/>
<comment type="function">
    <text evidence="3">Component of a beta-galactosidase.</text>
</comment>
<comment type="catalytic activity">
    <reaction evidence="2">
        <text>Hydrolysis of terminal non-reducing beta-D-galactose residues in beta-D-galactosides.</text>
        <dbReference type="EC" id="3.2.1.23"/>
    </reaction>
</comment>
<comment type="subunit">
    <text evidence="6">Heterodimer of a large (LacL) and a small subunit (LacM).</text>
</comment>
<comment type="similarity">
    <text evidence="5">Belongs to the glycosyl hydrolase 2 family.</text>
</comment>
<reference key="1">
    <citation type="journal article" date="1995" name="Microbiology">
        <title>Two genes encoding the beta-galactosidase of Lactobacillus sake.</title>
        <authorList>
            <person name="Obst M."/>
            <person name="Meding E.R."/>
            <person name="Vogel R.F."/>
            <person name="Hammes W.P."/>
        </authorList>
    </citation>
    <scope>NUCLEOTIDE SEQUENCE [GENOMIC DNA]</scope>
    <scope>FUNCTION</scope>
    <scope>SUBUNIT</scope>
    <source>
        <strain>ATCC 15521 / DSM 20017 / JCM 1157 / CCUG 30501 / CIP 103139 / KCTC 3603 / NBRC 15893 / NCIMB 13090 / T.S</strain>
    </source>
</reference>
<name>BGAL_LATSK</name>
<feature type="chain" id="PRO_0000057670" description="Beta-galactosidase large subunit">
    <location>
        <begin position="1"/>
        <end position="625"/>
    </location>
</feature>
<feature type="active site" description="Proton donor" evidence="1">
    <location>
        <position position="465"/>
    </location>
</feature>
<feature type="active site" description="Nucleophile" evidence="1">
    <location>
        <position position="533"/>
    </location>
</feature>